<protein>
    <recommendedName>
        <fullName evidence="1 7">Aminoglycoside N(6')-acetyltransferase type 1</fullName>
        <ecNumber evidence="4">2.3.1.82</ecNumber>
    </recommendedName>
    <alternativeName>
        <fullName evidence="7">AAC(6')-Iz</fullName>
    </alternativeName>
    <alternativeName>
        <fullName evidence="5">Aminoglycoside resistance protein</fullName>
    </alternativeName>
</protein>
<name>AAC6_STEMA</name>
<organism>
    <name type="scientific">Stenotrophomonas maltophilia</name>
    <name type="common">Pseudomonas maltophilia</name>
    <name type="synonym">Xanthomonas maltophilia</name>
    <dbReference type="NCBI Taxonomy" id="40324"/>
    <lineage>
        <taxon>Bacteria</taxon>
        <taxon>Pseudomonadati</taxon>
        <taxon>Pseudomonadota</taxon>
        <taxon>Gammaproteobacteria</taxon>
        <taxon>Lysobacterales</taxon>
        <taxon>Lysobacteraceae</taxon>
        <taxon>Stenotrophomonas</taxon>
        <taxon>Stenotrophomonas maltophilia group</taxon>
    </lineage>
</organism>
<comment type="function">
    <text evidence="4">Catalyzes the transfer of an acetyl group from acetyl-CoA to the 6'-amino group of aminoglycoside molecules conferring resistance to antibiotics containing the purpurosamine ring including amikacin, gentamicin, kanamycin B, tobramycin, netilmicin, and isepamicin.</text>
</comment>
<comment type="catalytic activity">
    <reaction evidence="4">
        <text>kanamycin B + acetyl-CoA = N(6')-acetylkanamycin B + CoA + H(+)</text>
        <dbReference type="Rhea" id="RHEA:16449"/>
        <dbReference type="ChEBI" id="CHEBI:15378"/>
        <dbReference type="ChEBI" id="CHEBI:57287"/>
        <dbReference type="ChEBI" id="CHEBI:57288"/>
        <dbReference type="ChEBI" id="CHEBI:58390"/>
        <dbReference type="ChEBI" id="CHEBI:58549"/>
        <dbReference type="EC" id="2.3.1.82"/>
    </reaction>
</comment>
<comment type="subunit">
    <text evidence="2">Homodimer.</text>
</comment>
<sequence length="153" mass="16516">MIASAPTIRQATPADAAAWAQLRLGLWPDADDPLEELTQSLADAEGAVFLACAADGETVGFAEVRLRHDYVNGTESSPVGFLEGWYVQPQWQGSGVGRALLAAVQAWTRDAGCRELASDSRVEDVQAHAAHRACGFEETERVVYFRMPLEPSA</sequence>
<feature type="chain" id="PRO_0000416832" description="Aminoglycoside N(6')-acetyltransferase type 1">
    <location>
        <begin position="1"/>
        <end position="153"/>
    </location>
</feature>
<feature type="domain" description="N-acetyltransferase" evidence="3">
    <location>
        <begin position="6"/>
        <end position="153"/>
    </location>
</feature>
<feature type="binding site" evidence="2">
    <location>
        <position position="27"/>
    </location>
    <ligand>
        <name>substrate</name>
    </ligand>
</feature>
<feature type="binding site" evidence="2">
    <location>
        <position position="70"/>
    </location>
    <ligand>
        <name>substrate</name>
    </ligand>
</feature>
<feature type="binding site" evidence="2">
    <location>
        <position position="83"/>
    </location>
    <ligand>
        <name>substrate</name>
    </ligand>
</feature>
<feature type="binding site" evidence="2">
    <location>
        <position position="119"/>
    </location>
    <ligand>
        <name>substrate</name>
    </ligand>
</feature>
<feature type="binding site" evidence="2">
    <location>
        <position position="140"/>
    </location>
    <ligand>
        <name>substrate</name>
    </ligand>
</feature>
<accession>Q9RBW7</accession>
<evidence type="ECO:0000250" key="1">
    <source>
        <dbReference type="UniProtKB" id="P50858"/>
    </source>
</evidence>
<evidence type="ECO:0000250" key="2">
    <source>
        <dbReference type="UniProtKB" id="Q9R381"/>
    </source>
</evidence>
<evidence type="ECO:0000255" key="3">
    <source>
        <dbReference type="PROSITE-ProRule" id="PRU00532"/>
    </source>
</evidence>
<evidence type="ECO:0000269" key="4">
    <source>
    </source>
</evidence>
<evidence type="ECO:0000303" key="5">
    <source>
    </source>
</evidence>
<evidence type="ECO:0000305" key="6"/>
<evidence type="ECO:0000312" key="7">
    <source>
        <dbReference type="EMBL" id="AAD52985.1"/>
    </source>
</evidence>
<keyword id="KW-0012">Acyltransferase</keyword>
<keyword id="KW-0046">Antibiotic resistance</keyword>
<keyword id="KW-0808">Transferase</keyword>
<proteinExistence type="evidence at protein level"/>
<reference evidence="6 7" key="1">
    <citation type="journal article" date="1999" name="Antimicrob. Agents Chemother.">
        <title>Characterization of the chromosomal aac(6')-Iz gene of Stenotrophomonas maltophilia.</title>
        <authorList>
            <person name="Lambert T."/>
            <person name="Ploy M.C."/>
            <person name="Denis F."/>
            <person name="Courvalin P."/>
        </authorList>
    </citation>
    <scope>NUCLEOTIDE SEQUENCE [GENOMIC DNA]</scope>
    <scope>FUNCTION</scope>
    <scope>CATALYTIC ACTIVITY</scope>
    <scope>SUBSTRATE SPECIFICITY</scope>
    <source>
        <strain evidence="4">BM2690</strain>
    </source>
</reference>
<dbReference type="EC" id="2.3.1.82" evidence="4"/>
<dbReference type="EMBL" id="AF140221">
    <property type="protein sequence ID" value="AAD52985.1"/>
    <property type="molecule type" value="Genomic_DNA"/>
</dbReference>
<dbReference type="RefSeq" id="WP_005410660.1">
    <property type="nucleotide sequence ID" value="NZ_VLXA01000030.1"/>
</dbReference>
<dbReference type="SMR" id="Q9RBW7"/>
<dbReference type="CARD" id="ARO:3002570">
    <property type="molecule name" value="AAC(6')-Iz"/>
    <property type="mechanism identifier" value="ARO:0001004"/>
    <property type="mechanism name" value="antibiotic inactivation"/>
</dbReference>
<dbReference type="KEGG" id="ag:AAD52985"/>
<dbReference type="GO" id="GO:0047663">
    <property type="term" value="F:aminoglycoside 6'-N-acetyltransferase activity"/>
    <property type="evidence" value="ECO:0000314"/>
    <property type="project" value="UniProtKB"/>
</dbReference>
<dbReference type="GO" id="GO:0046677">
    <property type="term" value="P:response to antibiotic"/>
    <property type="evidence" value="ECO:0000314"/>
    <property type="project" value="UniProtKB"/>
</dbReference>
<dbReference type="CDD" id="cd04301">
    <property type="entry name" value="NAT_SF"/>
    <property type="match status" value="1"/>
</dbReference>
<dbReference type="Gene3D" id="3.40.630.30">
    <property type="match status" value="1"/>
</dbReference>
<dbReference type="InterPro" id="IPR016181">
    <property type="entry name" value="Acyl_CoA_acyltransferase"/>
</dbReference>
<dbReference type="InterPro" id="IPR024170">
    <property type="entry name" value="Aminoglycoside_N6-AcTrfrase"/>
</dbReference>
<dbReference type="InterPro" id="IPR050832">
    <property type="entry name" value="Bact_Acetyltransf"/>
</dbReference>
<dbReference type="InterPro" id="IPR000182">
    <property type="entry name" value="GNAT_dom"/>
</dbReference>
<dbReference type="NCBIfam" id="NF043067">
    <property type="entry name" value="AAC_6p_group_E"/>
    <property type="match status" value="1"/>
</dbReference>
<dbReference type="NCBIfam" id="NF000138">
    <property type="entry name" value="AAC_6p_Iz"/>
    <property type="match status" value="1"/>
</dbReference>
<dbReference type="NCBIfam" id="NF033075">
    <property type="entry name" value="AAC_6p_Steno"/>
    <property type="match status" value="1"/>
</dbReference>
<dbReference type="PANTHER" id="PTHR43877">
    <property type="entry name" value="AMINOALKYLPHOSPHONATE N-ACETYLTRANSFERASE-RELATED-RELATED"/>
    <property type="match status" value="1"/>
</dbReference>
<dbReference type="Pfam" id="PF00583">
    <property type="entry name" value="Acetyltransf_1"/>
    <property type="match status" value="1"/>
</dbReference>
<dbReference type="PIRSF" id="PIRSF000452">
    <property type="entry name" value="6-N-acetyltransf"/>
    <property type="match status" value="1"/>
</dbReference>
<dbReference type="SUPFAM" id="SSF55729">
    <property type="entry name" value="Acyl-CoA N-acyltransferases (Nat)"/>
    <property type="match status" value="1"/>
</dbReference>
<dbReference type="PROSITE" id="PS51186">
    <property type="entry name" value="GNAT"/>
    <property type="match status" value="1"/>
</dbReference>